<protein>
    <recommendedName>
        <fullName evidence="1">Acetate kinase</fullName>
        <ecNumber evidence="1">2.7.2.1</ecNumber>
    </recommendedName>
    <alternativeName>
        <fullName evidence="1">Acetokinase</fullName>
    </alternativeName>
</protein>
<name>ACKA_MESFL</name>
<comment type="function">
    <text evidence="1">Catalyzes the formation of acetyl phosphate from acetate and ATP. Can also catalyze the reverse reaction.</text>
</comment>
<comment type="catalytic activity">
    <reaction evidence="1">
        <text>acetate + ATP = acetyl phosphate + ADP</text>
        <dbReference type="Rhea" id="RHEA:11352"/>
        <dbReference type="ChEBI" id="CHEBI:22191"/>
        <dbReference type="ChEBI" id="CHEBI:30089"/>
        <dbReference type="ChEBI" id="CHEBI:30616"/>
        <dbReference type="ChEBI" id="CHEBI:456216"/>
        <dbReference type="EC" id="2.7.2.1"/>
    </reaction>
</comment>
<comment type="cofactor">
    <cofactor evidence="1">
        <name>Mg(2+)</name>
        <dbReference type="ChEBI" id="CHEBI:18420"/>
    </cofactor>
    <cofactor evidence="1">
        <name>Mn(2+)</name>
        <dbReference type="ChEBI" id="CHEBI:29035"/>
    </cofactor>
    <text evidence="1">Mg(2+). Can also accept Mn(2+).</text>
</comment>
<comment type="pathway">
    <text evidence="1">Metabolic intermediate biosynthesis; acetyl-CoA biosynthesis; acetyl-CoA from acetate: step 1/2.</text>
</comment>
<comment type="subunit">
    <text evidence="1">Homodimer.</text>
</comment>
<comment type="subcellular location">
    <subcellularLocation>
        <location evidence="1">Cytoplasm</location>
    </subcellularLocation>
</comment>
<comment type="similarity">
    <text evidence="1">Belongs to the acetokinase family.</text>
</comment>
<reference key="1">
    <citation type="submission" date="2004-06" db="EMBL/GenBank/DDBJ databases">
        <authorList>
            <person name="Birren B.W."/>
            <person name="Stange-Thomann N."/>
            <person name="Hafez N."/>
            <person name="DeCaprio D."/>
            <person name="Fisher S."/>
            <person name="Butler J."/>
            <person name="Elkins T."/>
            <person name="Kodira C.D."/>
            <person name="Major J."/>
            <person name="Wang S."/>
            <person name="Nicol R."/>
            <person name="Nusbaum C."/>
        </authorList>
    </citation>
    <scope>NUCLEOTIDE SEQUENCE [LARGE SCALE GENOMIC DNA]</scope>
    <source>
        <strain>ATCC 33453 / NBRC 100688 / NCTC 11704 / L1</strain>
    </source>
</reference>
<accession>Q6F273</accession>
<evidence type="ECO:0000255" key="1">
    <source>
        <dbReference type="HAMAP-Rule" id="MF_00020"/>
    </source>
</evidence>
<gene>
    <name evidence="1" type="primary">ackA</name>
    <name type="ordered locus">Mfl044</name>
</gene>
<proteinExistence type="inferred from homology"/>
<sequence length="396" mass="44002">MILVVNAGSSSIKFRLFNDLDKSNPIDILDGLAERITVDGAVSFKYEGKKYEYNVELPNHEVAIKFILDKLIELNIISNVDDINAVGFRVVHGGTISKSSIIDQKVFDTIKDAVKLAPLHNPGAITAIEAIEKVMPKAKLVACFDTAYHQTLAEEQYLYAVPYSWYKEHGVRKYGFHGISYQYIAEKMSEVLAKPKDQLNLIVCHLGNGASITCIKNGKSFDTTMGLTPLAGVMMGTRSGDIDPSIIEYMCKELQLDVSKITNILNKESGLLGLSGKSSDMRDVTGGYFKGDEDYKRALNKYTQVSADYIIRFANLLGHNIDGIVFTAGVGENSIHTRQFILEKLPLLDIEIDNAKNEESYGDYKYISSPNSKIKVLAVRTNEELMICKDTINLTK</sequence>
<keyword id="KW-0067">ATP-binding</keyword>
<keyword id="KW-0963">Cytoplasm</keyword>
<keyword id="KW-0418">Kinase</keyword>
<keyword id="KW-0460">Magnesium</keyword>
<keyword id="KW-0479">Metal-binding</keyword>
<keyword id="KW-0547">Nucleotide-binding</keyword>
<keyword id="KW-1185">Reference proteome</keyword>
<keyword id="KW-0808">Transferase</keyword>
<dbReference type="EC" id="2.7.2.1" evidence="1"/>
<dbReference type="EMBL" id="AE017263">
    <property type="protein sequence ID" value="AAT75400.1"/>
    <property type="molecule type" value="Genomic_DNA"/>
</dbReference>
<dbReference type="RefSeq" id="WP_011182941.1">
    <property type="nucleotide sequence ID" value="NC_006055.1"/>
</dbReference>
<dbReference type="RefSeq" id="YP_053284.1">
    <property type="nucleotide sequence ID" value="NC_006055.1"/>
</dbReference>
<dbReference type="SMR" id="Q6F273"/>
<dbReference type="STRING" id="265311.Mfl044"/>
<dbReference type="PaxDb" id="265311-Mfl044"/>
<dbReference type="EnsemblBacteria" id="AAT75400">
    <property type="protein sequence ID" value="AAT75400"/>
    <property type="gene ID" value="Mfl044"/>
</dbReference>
<dbReference type="GeneID" id="2898256"/>
<dbReference type="KEGG" id="mfl:Mfl044"/>
<dbReference type="PATRIC" id="fig|265311.5.peg.44"/>
<dbReference type="eggNOG" id="COG0282">
    <property type="taxonomic scope" value="Bacteria"/>
</dbReference>
<dbReference type="HOGENOM" id="CLU_020352_0_1_14"/>
<dbReference type="OrthoDB" id="9802453at2"/>
<dbReference type="UniPathway" id="UPA00340">
    <property type="reaction ID" value="UER00458"/>
</dbReference>
<dbReference type="Proteomes" id="UP000006647">
    <property type="component" value="Chromosome"/>
</dbReference>
<dbReference type="GO" id="GO:0005737">
    <property type="term" value="C:cytoplasm"/>
    <property type="evidence" value="ECO:0007669"/>
    <property type="project" value="UniProtKB-SubCell"/>
</dbReference>
<dbReference type="GO" id="GO:0008776">
    <property type="term" value="F:acetate kinase activity"/>
    <property type="evidence" value="ECO:0007669"/>
    <property type="project" value="UniProtKB-UniRule"/>
</dbReference>
<dbReference type="GO" id="GO:0005524">
    <property type="term" value="F:ATP binding"/>
    <property type="evidence" value="ECO:0007669"/>
    <property type="project" value="UniProtKB-KW"/>
</dbReference>
<dbReference type="GO" id="GO:0000287">
    <property type="term" value="F:magnesium ion binding"/>
    <property type="evidence" value="ECO:0007669"/>
    <property type="project" value="UniProtKB-UniRule"/>
</dbReference>
<dbReference type="GO" id="GO:0006083">
    <property type="term" value="P:acetate metabolic process"/>
    <property type="evidence" value="ECO:0007669"/>
    <property type="project" value="TreeGrafter"/>
</dbReference>
<dbReference type="GO" id="GO:0006085">
    <property type="term" value="P:acetyl-CoA biosynthetic process"/>
    <property type="evidence" value="ECO:0007669"/>
    <property type="project" value="UniProtKB-UniRule"/>
</dbReference>
<dbReference type="CDD" id="cd24010">
    <property type="entry name" value="ASKHA_NBD_AcK_PK"/>
    <property type="match status" value="1"/>
</dbReference>
<dbReference type="Gene3D" id="3.30.420.40">
    <property type="match status" value="2"/>
</dbReference>
<dbReference type="HAMAP" id="MF_00020">
    <property type="entry name" value="Acetate_kinase"/>
    <property type="match status" value="1"/>
</dbReference>
<dbReference type="InterPro" id="IPR004372">
    <property type="entry name" value="Ac/propionate_kinase"/>
</dbReference>
<dbReference type="InterPro" id="IPR000890">
    <property type="entry name" value="Aliphatic_acid_kin_short-chain"/>
</dbReference>
<dbReference type="InterPro" id="IPR023865">
    <property type="entry name" value="Aliphatic_acid_kinase_CS"/>
</dbReference>
<dbReference type="InterPro" id="IPR043129">
    <property type="entry name" value="ATPase_NBD"/>
</dbReference>
<dbReference type="NCBIfam" id="TIGR00016">
    <property type="entry name" value="ackA"/>
    <property type="match status" value="1"/>
</dbReference>
<dbReference type="PANTHER" id="PTHR21060">
    <property type="entry name" value="ACETATE KINASE"/>
    <property type="match status" value="1"/>
</dbReference>
<dbReference type="PANTHER" id="PTHR21060:SF15">
    <property type="entry name" value="ACETATE KINASE-RELATED"/>
    <property type="match status" value="1"/>
</dbReference>
<dbReference type="Pfam" id="PF00871">
    <property type="entry name" value="Acetate_kinase"/>
    <property type="match status" value="1"/>
</dbReference>
<dbReference type="PIRSF" id="PIRSF000722">
    <property type="entry name" value="Acetate_prop_kin"/>
    <property type="match status" value="1"/>
</dbReference>
<dbReference type="PRINTS" id="PR00471">
    <property type="entry name" value="ACETATEKNASE"/>
</dbReference>
<dbReference type="SUPFAM" id="SSF53067">
    <property type="entry name" value="Actin-like ATPase domain"/>
    <property type="match status" value="2"/>
</dbReference>
<dbReference type="PROSITE" id="PS01075">
    <property type="entry name" value="ACETATE_KINASE_1"/>
    <property type="match status" value="1"/>
</dbReference>
<dbReference type="PROSITE" id="PS01076">
    <property type="entry name" value="ACETATE_KINASE_2"/>
    <property type="match status" value="1"/>
</dbReference>
<organism>
    <name type="scientific">Mesoplasma florum (strain ATCC 33453 / NBRC 100688 / NCTC 11704 / L1)</name>
    <name type="common">Acholeplasma florum</name>
    <dbReference type="NCBI Taxonomy" id="265311"/>
    <lineage>
        <taxon>Bacteria</taxon>
        <taxon>Bacillati</taxon>
        <taxon>Mycoplasmatota</taxon>
        <taxon>Mollicutes</taxon>
        <taxon>Entomoplasmatales</taxon>
        <taxon>Entomoplasmataceae</taxon>
        <taxon>Mesoplasma</taxon>
    </lineage>
</organism>
<feature type="chain" id="PRO_0000107582" description="Acetate kinase">
    <location>
        <begin position="1"/>
        <end position="396"/>
    </location>
</feature>
<feature type="active site" description="Proton donor/acceptor" evidence="1">
    <location>
        <position position="145"/>
    </location>
</feature>
<feature type="binding site" evidence="1">
    <location>
        <position position="6"/>
    </location>
    <ligand>
        <name>Mg(2+)</name>
        <dbReference type="ChEBI" id="CHEBI:18420"/>
    </ligand>
</feature>
<feature type="binding site" evidence="1">
    <location>
        <position position="13"/>
    </location>
    <ligand>
        <name>ATP</name>
        <dbReference type="ChEBI" id="CHEBI:30616"/>
    </ligand>
</feature>
<feature type="binding site" evidence="1">
    <location>
        <position position="89"/>
    </location>
    <ligand>
        <name>substrate</name>
    </ligand>
</feature>
<feature type="binding site" evidence="1">
    <location>
        <begin position="205"/>
        <end position="209"/>
    </location>
    <ligand>
        <name>ATP</name>
        <dbReference type="ChEBI" id="CHEBI:30616"/>
    </ligand>
</feature>
<feature type="binding site" evidence="1">
    <location>
        <begin position="280"/>
        <end position="282"/>
    </location>
    <ligand>
        <name>ATP</name>
        <dbReference type="ChEBI" id="CHEBI:30616"/>
    </ligand>
</feature>
<feature type="binding site" evidence="1">
    <location>
        <begin position="329"/>
        <end position="333"/>
    </location>
    <ligand>
        <name>ATP</name>
        <dbReference type="ChEBI" id="CHEBI:30616"/>
    </ligand>
</feature>
<feature type="binding site" evidence="1">
    <location>
        <position position="383"/>
    </location>
    <ligand>
        <name>Mg(2+)</name>
        <dbReference type="ChEBI" id="CHEBI:18420"/>
    </ligand>
</feature>
<feature type="site" description="Transition state stabilizer" evidence="1">
    <location>
        <position position="177"/>
    </location>
</feature>
<feature type="site" description="Transition state stabilizer" evidence="1">
    <location>
        <position position="238"/>
    </location>
</feature>